<dbReference type="EMBL" id="AY372243">
    <property type="protein sequence ID" value="AAQ73703.1"/>
    <property type="molecule type" value="Genomic_DNA"/>
</dbReference>
<dbReference type="RefSeq" id="NP_944397.1">
    <property type="nucleotide sequence ID" value="NC_005264.1"/>
</dbReference>
<dbReference type="SMR" id="Q6UDK7"/>
<dbReference type="GeneID" id="2657013"/>
<dbReference type="KEGG" id="vg:2657013"/>
<dbReference type="Proteomes" id="UP000006840">
    <property type="component" value="Segment"/>
</dbReference>
<dbReference type="GO" id="GO:0043657">
    <property type="term" value="C:host cell"/>
    <property type="evidence" value="ECO:0007669"/>
    <property type="project" value="GOC"/>
</dbReference>
<dbReference type="GO" id="GO:0042025">
    <property type="term" value="C:host cell nucleus"/>
    <property type="evidence" value="ECO:0007669"/>
    <property type="project" value="UniProtKB-SubCell"/>
</dbReference>
<dbReference type="GO" id="GO:0019028">
    <property type="term" value="C:viral capsid"/>
    <property type="evidence" value="ECO:0007669"/>
    <property type="project" value="UniProtKB-KW"/>
</dbReference>
<dbReference type="GO" id="GO:0046718">
    <property type="term" value="P:symbiont entry into host cell"/>
    <property type="evidence" value="ECO:0007669"/>
    <property type="project" value="UniProtKB-KW"/>
</dbReference>
<dbReference type="GO" id="GO:0019072">
    <property type="term" value="P:viral genome packaging"/>
    <property type="evidence" value="ECO:0007669"/>
    <property type="project" value="InterPro"/>
</dbReference>
<dbReference type="GO" id="GO:0075732">
    <property type="term" value="P:viral penetration into host nucleus"/>
    <property type="evidence" value="ECO:0007669"/>
    <property type="project" value="UniProtKB-KW"/>
</dbReference>
<dbReference type="HAMAP" id="MF_04025">
    <property type="entry name" value="HSV_CVC2"/>
    <property type="match status" value="1"/>
</dbReference>
<dbReference type="InterPro" id="IPR002493">
    <property type="entry name" value="Herpes_UL25"/>
</dbReference>
<dbReference type="Pfam" id="PF01499">
    <property type="entry name" value="Herpes_UL25"/>
    <property type="match status" value="1"/>
</dbReference>
<keyword id="KW-0167">Capsid protein</keyword>
<keyword id="KW-1048">Host nucleus</keyword>
<keyword id="KW-0945">Host-virus interaction</keyword>
<keyword id="KW-1185">Reference proteome</keyword>
<keyword id="KW-0231">Viral genome packaging</keyword>
<keyword id="KW-1163">Viral penetration into host nucleus</keyword>
<keyword id="KW-1188">Viral release from host cell</keyword>
<keyword id="KW-0946">Virion</keyword>
<keyword id="KW-1160">Virus entry into host cell</keyword>
<comment type="function">
    <text evidence="1">Capsid vertex-specific component that plays a role during viral DNA encapsidation, assuring correct genome cleavage and presumably stabilizing capsids that contain full-length viral genomes. Participates in the interaction between the capsid and the tegument through interaction with the large tegument protein/LTP.</text>
</comment>
<comment type="subunit">
    <text evidence="1">Heterodimerizes with CVC1. Interacts with major capsid protein/MCP and triplex capsid protein 1/TRX1 at the pentamer vertices. Interacts with the large tegument protein/LTP.</text>
</comment>
<comment type="subcellular location">
    <subcellularLocation>
        <location evidence="1">Virion</location>
    </subcellularLocation>
    <subcellularLocation>
        <location evidence="1">Host nucleus</location>
    </subcellularLocation>
</comment>
<comment type="similarity">
    <text evidence="1">Belongs to the herpesviridae CVC2 protein family.</text>
</comment>
<evidence type="ECO:0000255" key="1">
    <source>
        <dbReference type="HAMAP-Rule" id="MF_04025"/>
    </source>
</evidence>
<evidence type="ECO:0000256" key="2">
    <source>
        <dbReference type="SAM" id="MobiDB-lite"/>
    </source>
</evidence>
<protein>
    <recommendedName>
        <fullName evidence="1">Capsid vertex component 2</fullName>
    </recommendedName>
</protein>
<gene>
    <name evidence="1" type="primary">CVC2</name>
    <name type="ordered locus">UL25</name>
</gene>
<proteinExistence type="inferred from homology"/>
<accession>Q6UDK7</accession>
<sequence length="627" mass="68655">MFGRGLPPLKFGQIGGDGWSTVLADPGNRLIVANAHRSEPRLRVETLIREELLTSRARIEDLERRNRAAHAALDRLAGKAVAIPLRAAAELKNVERPLEAAVELLEDMAERAHHEHEPAVVEDERCRKLSAGDQSGQDAGDDDDAGVIRILKNGSVIPLWKPRTGAKDFHVNFVTMAFAASGDGRVGFGSWYRALQSQLLDSSRGMERILGVSQDGRVSSRLVRAVIRVLRSAAEIYVGHRNYSAFEAAVMCLFQYDAAKRELADAKDGRGSSSGNEPRPASTFEEAIKLVPHYLRALQEDVRREWGAVSYAFDRTKLPQKFFSPVDAKKYSNGALSPHIVYRLFKARGVFAATGREVTKEEIATVDPDFSRFDDPIANLSLAFFPARRSPLSLHEDEPLMRAAIDAVALMMLLQRLMYNSDVYANSMANRFQAAAFFEGRVTGPVAPASGDVYGDRLSGDGDPIRAPGSRPPAAAEATLSGDGSRDVVSLDNNLVFLFDKYLCPMYRYDNRTEMTGFFPGLAAVCLVGKVRGVPSPSSAGDCCSSLINLVDLDLRKTENTGAGAAVVLTVHDAITYDMETGLSRLLSVFDVKKHMKPVLRAMNVETDSDLIYFLCLGCLPHHVTIA</sequence>
<reference key="1">
    <citation type="journal article" date="2006" name="J. Virol.">
        <title>Psittacid herpesvirus 1 and infectious laryngotracheitis virus: Comparative genome sequence analysis of two avian alphaherpesviruses.</title>
        <authorList>
            <person name="Thureen D.R."/>
            <person name="Keeler C.L. Jr."/>
        </authorList>
    </citation>
    <scope>NUCLEOTIDE SEQUENCE [LARGE SCALE GENOMIC DNA]</scope>
</reference>
<organism>
    <name type="scientific">Psittacid herpesvirus 1 (isolate Amazon parrot/-/97-0001/1997)</name>
    <name type="common">PsHV-1</name>
    <name type="synonym">Pacheco's disease virus</name>
    <dbReference type="NCBI Taxonomy" id="670426"/>
    <lineage>
        <taxon>Viruses</taxon>
        <taxon>Duplodnaviria</taxon>
        <taxon>Heunggongvirae</taxon>
        <taxon>Peploviricota</taxon>
        <taxon>Herviviricetes</taxon>
        <taxon>Herpesvirales</taxon>
        <taxon>Orthoherpesviridae</taxon>
        <taxon>Alphaherpesvirinae</taxon>
        <taxon>Iltovirus</taxon>
        <taxon>Iltovirus psittacidalpha1</taxon>
        <taxon>Psittacid alphaherpesvirus 1</taxon>
    </lineage>
</organism>
<name>CVC2_PSHV1</name>
<feature type="chain" id="PRO_0000406811" description="Capsid vertex component 2">
    <location>
        <begin position="1"/>
        <end position="627"/>
    </location>
</feature>
<feature type="region of interest" description="Interaction with major capsid protein/MCP" evidence="1">
    <location>
        <begin position="1"/>
        <end position="56"/>
    </location>
</feature>
<feature type="region of interest" description="Disordered" evidence="2">
    <location>
        <begin position="458"/>
        <end position="480"/>
    </location>
</feature>
<organismHost>
    <name type="scientific">Amazona oratrix</name>
    <name type="common">yellow-headed parrot</name>
    <dbReference type="NCBI Taxonomy" id="152276"/>
</organismHost>